<sequence>MILGLALIPSKSFQEAVDSYRKRYDKQYSRIKPHVTIKAPFEIEDGDLDSVIEQVRARINGIPAVEVHATKASSFKPTNNVIYFKVAKTDDLEELFNRFNGEDFYGEAEHVFVPHFTIAQGLSSQEFEDIFGQVALAGVDHKEIIDELTLLRFDDDEDKWKVIETFKLA</sequence>
<evidence type="ECO:0000255" key="1">
    <source>
        <dbReference type="HAMAP-Rule" id="MF_01444"/>
    </source>
</evidence>
<keyword id="KW-0378">Hydrolase</keyword>
<comment type="similarity">
    <text evidence="1">Belongs to the 2H phosphoesterase superfamily. YjcG family.</text>
</comment>
<feature type="chain" id="PRO_1000068568" description="Putative phosphoesterase SAHV_1009">
    <location>
        <begin position="1"/>
        <end position="169"/>
    </location>
</feature>
<feature type="short sequence motif" description="HXTX 1" evidence="1">
    <location>
        <begin position="34"/>
        <end position="37"/>
    </location>
</feature>
<feature type="short sequence motif" description="HXTX 2" evidence="1">
    <location>
        <begin position="115"/>
        <end position="118"/>
    </location>
</feature>
<feature type="active site" description="Proton donor" evidence="1">
    <location>
        <position position="34"/>
    </location>
</feature>
<feature type="active site" description="Proton acceptor" evidence="1">
    <location>
        <position position="115"/>
    </location>
</feature>
<dbReference type="EC" id="3.1.-.-" evidence="1"/>
<dbReference type="EMBL" id="AP009324">
    <property type="protein sequence ID" value="BAF77892.1"/>
    <property type="molecule type" value="Genomic_DNA"/>
</dbReference>
<dbReference type="RefSeq" id="WP_000600387.1">
    <property type="nucleotide sequence ID" value="NC_009782.1"/>
</dbReference>
<dbReference type="SMR" id="A7X0P2"/>
<dbReference type="KEGG" id="saw:SAHV_1009"/>
<dbReference type="HOGENOM" id="CLU_132020_0_0_9"/>
<dbReference type="GO" id="GO:0016788">
    <property type="term" value="F:hydrolase activity, acting on ester bonds"/>
    <property type="evidence" value="ECO:0007669"/>
    <property type="project" value="UniProtKB-UniRule"/>
</dbReference>
<dbReference type="Gene3D" id="3.90.1140.10">
    <property type="entry name" value="Cyclic phosphodiesterase"/>
    <property type="match status" value="1"/>
</dbReference>
<dbReference type="HAMAP" id="MF_01444">
    <property type="entry name" value="2H_phosphoesterase_YjcG"/>
    <property type="match status" value="1"/>
</dbReference>
<dbReference type="InterPro" id="IPR050580">
    <property type="entry name" value="2H_phosphoesterase_YjcG-like"/>
</dbReference>
<dbReference type="InterPro" id="IPR009097">
    <property type="entry name" value="Cyclic_Pdiesterase"/>
</dbReference>
<dbReference type="InterPro" id="IPR022932">
    <property type="entry name" value="YjcG"/>
</dbReference>
<dbReference type="NCBIfam" id="NF010223">
    <property type="entry name" value="PRK13679.1"/>
    <property type="match status" value="1"/>
</dbReference>
<dbReference type="PANTHER" id="PTHR40037:SF1">
    <property type="entry name" value="PHOSPHOESTERASE SAOUHSC_00951-RELATED"/>
    <property type="match status" value="1"/>
</dbReference>
<dbReference type="PANTHER" id="PTHR40037">
    <property type="entry name" value="PHOSPHOESTERASE YJCG-RELATED"/>
    <property type="match status" value="1"/>
</dbReference>
<dbReference type="Pfam" id="PF13563">
    <property type="entry name" value="2_5_RNA_ligase2"/>
    <property type="match status" value="1"/>
</dbReference>
<dbReference type="SUPFAM" id="SSF55144">
    <property type="entry name" value="LigT-like"/>
    <property type="match status" value="1"/>
</dbReference>
<accession>A7X0P2</accession>
<reference key="1">
    <citation type="journal article" date="2008" name="Antimicrob. Agents Chemother.">
        <title>Mutated response regulator graR is responsible for phenotypic conversion of Staphylococcus aureus from heterogeneous vancomycin-intermediate resistance to vancomycin-intermediate resistance.</title>
        <authorList>
            <person name="Neoh H.-M."/>
            <person name="Cui L."/>
            <person name="Yuzawa H."/>
            <person name="Takeuchi F."/>
            <person name="Matsuo M."/>
            <person name="Hiramatsu K."/>
        </authorList>
    </citation>
    <scope>NUCLEOTIDE SEQUENCE [LARGE SCALE GENOMIC DNA]</scope>
    <source>
        <strain>Mu3 / ATCC 700698</strain>
    </source>
</reference>
<protein>
    <recommendedName>
        <fullName evidence="1">Putative phosphoesterase SAHV_1009</fullName>
        <ecNumber evidence="1">3.1.-.-</ecNumber>
    </recommendedName>
</protein>
<organism>
    <name type="scientific">Staphylococcus aureus (strain Mu3 / ATCC 700698)</name>
    <dbReference type="NCBI Taxonomy" id="418127"/>
    <lineage>
        <taxon>Bacteria</taxon>
        <taxon>Bacillati</taxon>
        <taxon>Bacillota</taxon>
        <taxon>Bacilli</taxon>
        <taxon>Bacillales</taxon>
        <taxon>Staphylococcaceae</taxon>
        <taxon>Staphylococcus</taxon>
    </lineage>
</organism>
<gene>
    <name type="ordered locus">SAHV_1009</name>
</gene>
<name>Y1009_STAA1</name>
<proteinExistence type="inferred from homology"/>